<gene>
    <name evidence="1" type="primary">ubiG</name>
    <name type="ordered locus">plu3051</name>
</gene>
<dbReference type="EC" id="2.1.1.222" evidence="1"/>
<dbReference type="EC" id="2.1.1.64" evidence="1"/>
<dbReference type="EMBL" id="BX571869">
    <property type="protein sequence ID" value="CAE15425.1"/>
    <property type="molecule type" value="Genomic_DNA"/>
</dbReference>
<dbReference type="RefSeq" id="WP_011147268.1">
    <property type="nucleotide sequence ID" value="NC_005126.1"/>
</dbReference>
<dbReference type="SMR" id="Q7N2M5"/>
<dbReference type="STRING" id="243265.plu3051"/>
<dbReference type="GeneID" id="48849311"/>
<dbReference type="KEGG" id="plu:plu3051"/>
<dbReference type="eggNOG" id="COG2227">
    <property type="taxonomic scope" value="Bacteria"/>
</dbReference>
<dbReference type="HOGENOM" id="CLU_042432_5_0_6"/>
<dbReference type="OrthoDB" id="9801538at2"/>
<dbReference type="UniPathway" id="UPA00232"/>
<dbReference type="Proteomes" id="UP000002514">
    <property type="component" value="Chromosome"/>
</dbReference>
<dbReference type="GO" id="GO:0102208">
    <property type="term" value="F:2-polyprenyl-6-hydroxyphenol methylase activity"/>
    <property type="evidence" value="ECO:0007669"/>
    <property type="project" value="UniProtKB-EC"/>
</dbReference>
<dbReference type="GO" id="GO:0061542">
    <property type="term" value="F:3-demethylubiquinol 3-O-methyltransferase activity"/>
    <property type="evidence" value="ECO:0007669"/>
    <property type="project" value="UniProtKB-UniRule"/>
</dbReference>
<dbReference type="GO" id="GO:0010420">
    <property type="term" value="F:polyprenyldihydroxybenzoate methyltransferase activity"/>
    <property type="evidence" value="ECO:0007669"/>
    <property type="project" value="InterPro"/>
</dbReference>
<dbReference type="GO" id="GO:0032259">
    <property type="term" value="P:methylation"/>
    <property type="evidence" value="ECO:0007669"/>
    <property type="project" value="UniProtKB-KW"/>
</dbReference>
<dbReference type="CDD" id="cd02440">
    <property type="entry name" value="AdoMet_MTases"/>
    <property type="match status" value="1"/>
</dbReference>
<dbReference type="FunFam" id="3.40.50.150:FF:000028">
    <property type="entry name" value="Ubiquinone biosynthesis O-methyltransferase"/>
    <property type="match status" value="1"/>
</dbReference>
<dbReference type="Gene3D" id="3.40.50.150">
    <property type="entry name" value="Vaccinia Virus protein VP39"/>
    <property type="match status" value="1"/>
</dbReference>
<dbReference type="HAMAP" id="MF_00472">
    <property type="entry name" value="UbiG"/>
    <property type="match status" value="1"/>
</dbReference>
<dbReference type="InterPro" id="IPR029063">
    <property type="entry name" value="SAM-dependent_MTases_sf"/>
</dbReference>
<dbReference type="InterPro" id="IPR010233">
    <property type="entry name" value="UbiG_MeTrfase"/>
</dbReference>
<dbReference type="NCBIfam" id="TIGR01983">
    <property type="entry name" value="UbiG"/>
    <property type="match status" value="1"/>
</dbReference>
<dbReference type="PANTHER" id="PTHR43464">
    <property type="entry name" value="METHYLTRANSFERASE"/>
    <property type="match status" value="1"/>
</dbReference>
<dbReference type="PANTHER" id="PTHR43464:SF19">
    <property type="entry name" value="UBIQUINONE BIOSYNTHESIS O-METHYLTRANSFERASE, MITOCHONDRIAL"/>
    <property type="match status" value="1"/>
</dbReference>
<dbReference type="Pfam" id="PF13489">
    <property type="entry name" value="Methyltransf_23"/>
    <property type="match status" value="1"/>
</dbReference>
<dbReference type="SUPFAM" id="SSF53335">
    <property type="entry name" value="S-adenosyl-L-methionine-dependent methyltransferases"/>
    <property type="match status" value="1"/>
</dbReference>
<evidence type="ECO:0000255" key="1">
    <source>
        <dbReference type="HAMAP-Rule" id="MF_00472"/>
    </source>
</evidence>
<comment type="function">
    <text evidence="1">O-methyltransferase that catalyzes the 2 O-methylation steps in the ubiquinone biosynthetic pathway.</text>
</comment>
<comment type="catalytic activity">
    <reaction evidence="1">
        <text>a 3-demethylubiquinol + S-adenosyl-L-methionine = a ubiquinol + S-adenosyl-L-homocysteine + H(+)</text>
        <dbReference type="Rhea" id="RHEA:44380"/>
        <dbReference type="Rhea" id="RHEA-COMP:9566"/>
        <dbReference type="Rhea" id="RHEA-COMP:10914"/>
        <dbReference type="ChEBI" id="CHEBI:15378"/>
        <dbReference type="ChEBI" id="CHEBI:17976"/>
        <dbReference type="ChEBI" id="CHEBI:57856"/>
        <dbReference type="ChEBI" id="CHEBI:59789"/>
        <dbReference type="ChEBI" id="CHEBI:84422"/>
        <dbReference type="EC" id="2.1.1.64"/>
    </reaction>
</comment>
<comment type="catalytic activity">
    <reaction evidence="1">
        <text>a 3-(all-trans-polyprenyl)benzene-1,2-diol + S-adenosyl-L-methionine = a 2-methoxy-6-(all-trans-polyprenyl)phenol + S-adenosyl-L-homocysteine + H(+)</text>
        <dbReference type="Rhea" id="RHEA:31411"/>
        <dbReference type="Rhea" id="RHEA-COMP:9550"/>
        <dbReference type="Rhea" id="RHEA-COMP:9551"/>
        <dbReference type="ChEBI" id="CHEBI:15378"/>
        <dbReference type="ChEBI" id="CHEBI:57856"/>
        <dbReference type="ChEBI" id="CHEBI:59789"/>
        <dbReference type="ChEBI" id="CHEBI:62729"/>
        <dbReference type="ChEBI" id="CHEBI:62731"/>
        <dbReference type="EC" id="2.1.1.222"/>
    </reaction>
</comment>
<comment type="pathway">
    <text evidence="1">Cofactor biosynthesis; ubiquinone biosynthesis.</text>
</comment>
<comment type="similarity">
    <text evidence="1">Belongs to the methyltransferase superfamily. UbiG/COQ3 family.</text>
</comment>
<accession>Q7N2M5</accession>
<sequence length="240" mass="26989">MNIKTPSTPNNVDQQEIEKFEAIASRWWDLEGEFQPLHRINPLRLNYILQRSGGIFGKKVLDVGCGGGILSESMAREGADVTGLDMGTEPLQVARLHALETGIPVTYVQETVESHAEKYPQAYDIVTCMEMLEHVPDPQSVVHACAQLVKPGGHVFFSTINRNKKAWLMAVIGAEYILKMVPKGTHDAKKFIRPSELIGWIDRTSLREKHIIGLHYNPLTDKFSLGHNVDVNYMLHSQYV</sequence>
<name>UBIG_PHOLL</name>
<organism>
    <name type="scientific">Photorhabdus laumondii subsp. laumondii (strain DSM 15139 / CIP 105565 / TT01)</name>
    <name type="common">Photorhabdus luminescens subsp. laumondii</name>
    <dbReference type="NCBI Taxonomy" id="243265"/>
    <lineage>
        <taxon>Bacteria</taxon>
        <taxon>Pseudomonadati</taxon>
        <taxon>Pseudomonadota</taxon>
        <taxon>Gammaproteobacteria</taxon>
        <taxon>Enterobacterales</taxon>
        <taxon>Morganellaceae</taxon>
        <taxon>Photorhabdus</taxon>
    </lineage>
</organism>
<proteinExistence type="inferred from homology"/>
<reference key="1">
    <citation type="journal article" date="2003" name="Nat. Biotechnol.">
        <title>The genome sequence of the entomopathogenic bacterium Photorhabdus luminescens.</title>
        <authorList>
            <person name="Duchaud E."/>
            <person name="Rusniok C."/>
            <person name="Frangeul L."/>
            <person name="Buchrieser C."/>
            <person name="Givaudan A."/>
            <person name="Taourit S."/>
            <person name="Bocs S."/>
            <person name="Boursaux-Eude C."/>
            <person name="Chandler M."/>
            <person name="Charles J.-F."/>
            <person name="Dassa E."/>
            <person name="Derose R."/>
            <person name="Derzelle S."/>
            <person name="Freyssinet G."/>
            <person name="Gaudriault S."/>
            <person name="Medigue C."/>
            <person name="Lanois A."/>
            <person name="Powell K."/>
            <person name="Siguier P."/>
            <person name="Vincent R."/>
            <person name="Wingate V."/>
            <person name="Zouine M."/>
            <person name="Glaser P."/>
            <person name="Boemare N."/>
            <person name="Danchin A."/>
            <person name="Kunst F."/>
        </authorList>
    </citation>
    <scope>NUCLEOTIDE SEQUENCE [LARGE SCALE GENOMIC DNA]</scope>
    <source>
        <strain>DSM 15139 / CIP 105565 / TT01</strain>
    </source>
</reference>
<feature type="chain" id="PRO_0000193389" description="Ubiquinone biosynthesis O-methyltransferase">
    <location>
        <begin position="1"/>
        <end position="240"/>
    </location>
</feature>
<feature type="binding site" evidence="1">
    <location>
        <position position="44"/>
    </location>
    <ligand>
        <name>S-adenosyl-L-methionine</name>
        <dbReference type="ChEBI" id="CHEBI:59789"/>
    </ligand>
</feature>
<feature type="binding site" evidence="1">
    <location>
        <position position="64"/>
    </location>
    <ligand>
        <name>S-adenosyl-L-methionine</name>
        <dbReference type="ChEBI" id="CHEBI:59789"/>
    </ligand>
</feature>
<feature type="binding site" evidence="1">
    <location>
        <position position="85"/>
    </location>
    <ligand>
        <name>S-adenosyl-L-methionine</name>
        <dbReference type="ChEBI" id="CHEBI:59789"/>
    </ligand>
</feature>
<feature type="binding site" evidence="1">
    <location>
        <position position="129"/>
    </location>
    <ligand>
        <name>S-adenosyl-L-methionine</name>
        <dbReference type="ChEBI" id="CHEBI:59789"/>
    </ligand>
</feature>
<keyword id="KW-0489">Methyltransferase</keyword>
<keyword id="KW-1185">Reference proteome</keyword>
<keyword id="KW-0949">S-adenosyl-L-methionine</keyword>
<keyword id="KW-0808">Transferase</keyword>
<keyword id="KW-0831">Ubiquinone biosynthesis</keyword>
<protein>
    <recommendedName>
        <fullName evidence="1">Ubiquinone biosynthesis O-methyltransferase</fullName>
    </recommendedName>
    <alternativeName>
        <fullName evidence="1">2-polyprenyl-6-hydroxyphenol methylase</fullName>
        <ecNumber evidence="1">2.1.1.222</ecNumber>
    </alternativeName>
    <alternativeName>
        <fullName evidence="1">3-demethylubiquinone 3-O-methyltransferase</fullName>
        <ecNumber evidence="1">2.1.1.64</ecNumber>
    </alternativeName>
</protein>